<feature type="chain" id="PRO_0000409285" description="Chromosome partition protein Smc">
    <location>
        <begin position="1"/>
        <end position="1167"/>
    </location>
</feature>
<feature type="coiled-coil region" evidence="1">
    <location>
        <begin position="170"/>
        <end position="274"/>
    </location>
</feature>
<feature type="coiled-coil region" evidence="1">
    <location>
        <begin position="310"/>
        <end position="390"/>
    </location>
</feature>
<feature type="coiled-coil region" evidence="1">
    <location>
        <begin position="468"/>
        <end position="500"/>
    </location>
</feature>
<feature type="coiled-coil region" evidence="1">
    <location>
        <begin position="653"/>
        <end position="870"/>
    </location>
</feature>
<feature type="coiled-coil region" evidence="1">
    <location>
        <begin position="982"/>
        <end position="1011"/>
    </location>
</feature>
<feature type="binding site" evidence="1">
    <location>
        <begin position="32"/>
        <end position="39"/>
    </location>
    <ligand>
        <name>ATP</name>
        <dbReference type="ChEBI" id="CHEBI:30616"/>
    </ligand>
</feature>
<dbReference type="EMBL" id="AE013598">
    <property type="protein sequence ID" value="AAW75667.1"/>
    <property type="status" value="ALT_INIT"/>
    <property type="molecule type" value="Genomic_DNA"/>
</dbReference>
<dbReference type="STRING" id="291331.XOO2413"/>
<dbReference type="KEGG" id="xoo:XOO2413"/>
<dbReference type="PATRIC" id="fig|291331.8.peg.2684"/>
<dbReference type="HOGENOM" id="CLU_001042_2_2_6"/>
<dbReference type="Proteomes" id="UP000006735">
    <property type="component" value="Chromosome"/>
</dbReference>
<dbReference type="GO" id="GO:0005694">
    <property type="term" value="C:chromosome"/>
    <property type="evidence" value="ECO:0007669"/>
    <property type="project" value="InterPro"/>
</dbReference>
<dbReference type="GO" id="GO:0005737">
    <property type="term" value="C:cytoplasm"/>
    <property type="evidence" value="ECO:0007669"/>
    <property type="project" value="UniProtKB-SubCell"/>
</dbReference>
<dbReference type="GO" id="GO:0005524">
    <property type="term" value="F:ATP binding"/>
    <property type="evidence" value="ECO:0007669"/>
    <property type="project" value="UniProtKB-UniRule"/>
</dbReference>
<dbReference type="GO" id="GO:0016887">
    <property type="term" value="F:ATP hydrolysis activity"/>
    <property type="evidence" value="ECO:0007669"/>
    <property type="project" value="InterPro"/>
</dbReference>
<dbReference type="GO" id="GO:0003677">
    <property type="term" value="F:DNA binding"/>
    <property type="evidence" value="ECO:0007669"/>
    <property type="project" value="UniProtKB-UniRule"/>
</dbReference>
<dbReference type="GO" id="GO:0030261">
    <property type="term" value="P:chromosome condensation"/>
    <property type="evidence" value="ECO:0007669"/>
    <property type="project" value="InterPro"/>
</dbReference>
<dbReference type="GO" id="GO:0007059">
    <property type="term" value="P:chromosome segregation"/>
    <property type="evidence" value="ECO:0007669"/>
    <property type="project" value="UniProtKB-UniRule"/>
</dbReference>
<dbReference type="GO" id="GO:0006260">
    <property type="term" value="P:DNA replication"/>
    <property type="evidence" value="ECO:0007669"/>
    <property type="project" value="UniProtKB-UniRule"/>
</dbReference>
<dbReference type="GO" id="GO:0007062">
    <property type="term" value="P:sister chromatid cohesion"/>
    <property type="evidence" value="ECO:0007669"/>
    <property type="project" value="InterPro"/>
</dbReference>
<dbReference type="CDD" id="cd03278">
    <property type="entry name" value="ABC_SMC_barmotin"/>
    <property type="match status" value="2"/>
</dbReference>
<dbReference type="Gene3D" id="1.10.287.1490">
    <property type="match status" value="1"/>
</dbReference>
<dbReference type="Gene3D" id="3.40.50.300">
    <property type="entry name" value="P-loop containing nucleotide triphosphate hydrolases"/>
    <property type="match status" value="2"/>
</dbReference>
<dbReference type="HAMAP" id="MF_01894">
    <property type="entry name" value="Smc_prok"/>
    <property type="match status" value="1"/>
</dbReference>
<dbReference type="InterPro" id="IPR027417">
    <property type="entry name" value="P-loop_NTPase"/>
</dbReference>
<dbReference type="InterPro" id="IPR003395">
    <property type="entry name" value="RecF/RecN/SMC_N"/>
</dbReference>
<dbReference type="InterPro" id="IPR024704">
    <property type="entry name" value="SMC"/>
</dbReference>
<dbReference type="InterPro" id="IPR010935">
    <property type="entry name" value="SMC_hinge"/>
</dbReference>
<dbReference type="InterPro" id="IPR036277">
    <property type="entry name" value="SMC_hinge_sf"/>
</dbReference>
<dbReference type="InterPro" id="IPR011890">
    <property type="entry name" value="SMC_prok"/>
</dbReference>
<dbReference type="NCBIfam" id="TIGR02168">
    <property type="entry name" value="SMC_prok_B"/>
    <property type="match status" value="1"/>
</dbReference>
<dbReference type="PANTHER" id="PTHR43977">
    <property type="entry name" value="STRUCTURAL MAINTENANCE OF CHROMOSOMES PROTEIN 3"/>
    <property type="match status" value="1"/>
</dbReference>
<dbReference type="Pfam" id="PF06470">
    <property type="entry name" value="SMC_hinge"/>
    <property type="match status" value="1"/>
</dbReference>
<dbReference type="Pfam" id="PF02463">
    <property type="entry name" value="SMC_N"/>
    <property type="match status" value="1"/>
</dbReference>
<dbReference type="PIRSF" id="PIRSF005719">
    <property type="entry name" value="SMC"/>
    <property type="match status" value="1"/>
</dbReference>
<dbReference type="SMART" id="SM00968">
    <property type="entry name" value="SMC_hinge"/>
    <property type="match status" value="1"/>
</dbReference>
<dbReference type="SUPFAM" id="SSF52540">
    <property type="entry name" value="P-loop containing nucleoside triphosphate hydrolases"/>
    <property type="match status" value="1"/>
</dbReference>
<dbReference type="SUPFAM" id="SSF75553">
    <property type="entry name" value="Smc hinge domain"/>
    <property type="match status" value="1"/>
</dbReference>
<name>SMC_XANOR</name>
<organism>
    <name type="scientific">Xanthomonas oryzae pv. oryzae (strain KACC10331 / KXO85)</name>
    <dbReference type="NCBI Taxonomy" id="291331"/>
    <lineage>
        <taxon>Bacteria</taxon>
        <taxon>Pseudomonadati</taxon>
        <taxon>Pseudomonadota</taxon>
        <taxon>Gammaproteobacteria</taxon>
        <taxon>Lysobacterales</taxon>
        <taxon>Lysobacteraceae</taxon>
        <taxon>Xanthomonas</taxon>
    </lineage>
</organism>
<protein>
    <recommendedName>
        <fullName evidence="1">Chromosome partition protein Smc</fullName>
    </recommendedName>
</protein>
<keyword id="KW-0067">ATP-binding</keyword>
<keyword id="KW-0175">Coiled coil</keyword>
<keyword id="KW-0963">Cytoplasm</keyword>
<keyword id="KW-0238">DNA-binding</keyword>
<keyword id="KW-0547">Nucleotide-binding</keyword>
<keyword id="KW-1185">Reference proteome</keyword>
<sequence length="1167" mass="130072">MRLSTIKLSGFKSFVDPTTLHLPTNMTGIVGPNGCGKSNIIDAVRWVMGESSASRLRGDSLTDVIFSGSSARKPVSQATVELIFDNSDHTISGEFASFNEISVKRLVSRDGNSAYYLNGTKCRRRDITDLFLGTGLGPRSYSIIEQGMISQIIEARPEDLRVYLEEAAGISKYKERRKETETRIRHTRENLDRLGDLREEITKQLAHLQRQARQAEQYQALQEERRIKDAEWKALEYRGLDGQLQGLREKLNQEETRLQQFIAEQRDAEARIETGRVRREESAEAVAKAQADVYQVGGALARIEQQIQHQRELSHRLHKARDEAQSQLQELTQHISGDSAKLSVLREAVAAAEPQLEQLREDHEFRQESLREAEARLADWQQRWETHNRDTGEASRAGEVERTRVDYLDRQALEADRRREALVNERAGLDLDALAEAFEQIELRHETQKTSLDGLTEQVEARKHALGGLQEQQRASQGELAEVRKQAQAARGRLSSLETLQQAALGQEQGAAVAWLKSRGLDSAARVGERISVQSGWENAVEGALGQLIEGVLVDAPEQLVDALGELGDGRIALVSSATDNANFAPTSLAAKVQGPIAIRRLLARLHTAEDLDAARTLQRSLPEGDSVITRNGERLGEGWVRVSRSGAAKQGALLRERQIQELRTQIETLQEREAELEHQLASFREQLLAAEQQREDAQRQLYMAHRSVSELAGQLQSQQGKVDAARTRIERIETDLSQLLETLDTSREQAREARAKLEDAVTLMGDLQGTREALESERRQLTDARDQARDAARGVRDAMHALALTLESQRTQIASLSQTLERMDSQRGQLDTRLEDLVAQLSEGDSPVETLEHEHQAALSERVRTERALGEARTLLDSIDSELRSFEQTRQQRDEQALAQRERISQRKLDQQALVLSAEQLSAAVVKAGFVLEDVVNGLPESANPAEWEATVGQIDGRMRRLEPVNLAAIQEYGEAAQRSEYLDAQNLDLNTALETLEEAIRKIDRETRGRFKDTFDRVNSGVQALYPRLFGGGHAYLELTGEDLLDTGVTIMARPPGKRVSSISLLSGGEKAMTAVALVFAIFQLNPAPFCLLDEVDAPLDEANVGRLANMVREMSEKVQFLFVSHNKATMEAARQLSGVTMREPGVSRLVSVDLEEAARLAGAA</sequence>
<gene>
    <name evidence="1" type="primary">smc</name>
    <name type="ordered locus">XOO2413</name>
</gene>
<accession>Q5H054</accession>
<proteinExistence type="inferred from homology"/>
<evidence type="ECO:0000255" key="1">
    <source>
        <dbReference type="HAMAP-Rule" id="MF_01894"/>
    </source>
</evidence>
<evidence type="ECO:0000305" key="2"/>
<reference key="1">
    <citation type="journal article" date="2005" name="Nucleic Acids Res.">
        <title>The genome sequence of Xanthomonas oryzae pathovar oryzae KACC10331, the bacterial blight pathogen of rice.</title>
        <authorList>
            <person name="Lee B.-M."/>
            <person name="Park Y.-J."/>
            <person name="Park D.-S."/>
            <person name="Kang H.-W."/>
            <person name="Kim J.-G."/>
            <person name="Song E.-S."/>
            <person name="Park I.-C."/>
            <person name="Yoon U.-H."/>
            <person name="Hahn J.-H."/>
            <person name="Koo B.-S."/>
            <person name="Lee G.-B."/>
            <person name="Kim H."/>
            <person name="Park H.-S."/>
            <person name="Yoon K.-O."/>
            <person name="Kim J.-H."/>
            <person name="Jung C.-H."/>
            <person name="Koh N.-H."/>
            <person name="Seo J.-S."/>
            <person name="Go S.-J."/>
        </authorList>
    </citation>
    <scope>NUCLEOTIDE SEQUENCE [LARGE SCALE GENOMIC DNA]</scope>
    <source>
        <strain>KACC10331 / KXO85</strain>
    </source>
</reference>
<comment type="function">
    <text evidence="1">Required for chromosome condensation and partitioning.</text>
</comment>
<comment type="subunit">
    <text evidence="1">Homodimer.</text>
</comment>
<comment type="subcellular location">
    <subcellularLocation>
        <location evidence="1">Cytoplasm</location>
    </subcellularLocation>
</comment>
<comment type="domain">
    <text evidence="1">Contains large globular domains required for ATP hydrolysis at each terminus and a third globular domain forming a flexible hinge near the middle of the molecule. These domains are separated by coiled-coil structures.</text>
</comment>
<comment type="similarity">
    <text evidence="1">Belongs to the SMC family.</text>
</comment>
<comment type="sequence caution" evidence="2">
    <conflict type="erroneous initiation">
        <sequence resource="EMBL-CDS" id="AAW75667"/>
    </conflict>
    <text>Extended N-terminus.</text>
</comment>